<protein>
    <recommendedName>
        <fullName>Uncharacterized membrane protein YizD</fullName>
    </recommendedName>
</protein>
<name>YIZD_BACSU</name>
<proteinExistence type="predicted"/>
<accession>C0H3Y6</accession>
<organism>
    <name type="scientific">Bacillus subtilis (strain 168)</name>
    <dbReference type="NCBI Taxonomy" id="224308"/>
    <lineage>
        <taxon>Bacteria</taxon>
        <taxon>Bacillati</taxon>
        <taxon>Bacillota</taxon>
        <taxon>Bacilli</taxon>
        <taxon>Bacillales</taxon>
        <taxon>Bacillaceae</taxon>
        <taxon>Bacillus</taxon>
    </lineage>
</organism>
<reference key="1">
    <citation type="journal article" date="1997" name="Nature">
        <title>The complete genome sequence of the Gram-positive bacterium Bacillus subtilis.</title>
        <authorList>
            <person name="Kunst F."/>
            <person name="Ogasawara N."/>
            <person name="Moszer I."/>
            <person name="Albertini A.M."/>
            <person name="Alloni G."/>
            <person name="Azevedo V."/>
            <person name="Bertero M.G."/>
            <person name="Bessieres P."/>
            <person name="Bolotin A."/>
            <person name="Borchert S."/>
            <person name="Borriss R."/>
            <person name="Boursier L."/>
            <person name="Brans A."/>
            <person name="Braun M."/>
            <person name="Brignell S.C."/>
            <person name="Bron S."/>
            <person name="Brouillet S."/>
            <person name="Bruschi C.V."/>
            <person name="Caldwell B."/>
            <person name="Capuano V."/>
            <person name="Carter N.M."/>
            <person name="Choi S.-K."/>
            <person name="Codani J.-J."/>
            <person name="Connerton I.F."/>
            <person name="Cummings N.J."/>
            <person name="Daniel R.A."/>
            <person name="Denizot F."/>
            <person name="Devine K.M."/>
            <person name="Duesterhoeft A."/>
            <person name="Ehrlich S.D."/>
            <person name="Emmerson P.T."/>
            <person name="Entian K.-D."/>
            <person name="Errington J."/>
            <person name="Fabret C."/>
            <person name="Ferrari E."/>
            <person name="Foulger D."/>
            <person name="Fritz C."/>
            <person name="Fujita M."/>
            <person name="Fujita Y."/>
            <person name="Fuma S."/>
            <person name="Galizzi A."/>
            <person name="Galleron N."/>
            <person name="Ghim S.-Y."/>
            <person name="Glaser P."/>
            <person name="Goffeau A."/>
            <person name="Golightly E.J."/>
            <person name="Grandi G."/>
            <person name="Guiseppi G."/>
            <person name="Guy B.J."/>
            <person name="Haga K."/>
            <person name="Haiech J."/>
            <person name="Harwood C.R."/>
            <person name="Henaut A."/>
            <person name="Hilbert H."/>
            <person name="Holsappel S."/>
            <person name="Hosono S."/>
            <person name="Hullo M.-F."/>
            <person name="Itaya M."/>
            <person name="Jones L.-M."/>
            <person name="Joris B."/>
            <person name="Karamata D."/>
            <person name="Kasahara Y."/>
            <person name="Klaerr-Blanchard M."/>
            <person name="Klein C."/>
            <person name="Kobayashi Y."/>
            <person name="Koetter P."/>
            <person name="Koningstein G."/>
            <person name="Krogh S."/>
            <person name="Kumano M."/>
            <person name="Kurita K."/>
            <person name="Lapidus A."/>
            <person name="Lardinois S."/>
            <person name="Lauber J."/>
            <person name="Lazarevic V."/>
            <person name="Lee S.-M."/>
            <person name="Levine A."/>
            <person name="Liu H."/>
            <person name="Masuda S."/>
            <person name="Mauel C."/>
            <person name="Medigue C."/>
            <person name="Medina N."/>
            <person name="Mellado R.P."/>
            <person name="Mizuno M."/>
            <person name="Moestl D."/>
            <person name="Nakai S."/>
            <person name="Noback M."/>
            <person name="Noone D."/>
            <person name="O'Reilly M."/>
            <person name="Ogawa K."/>
            <person name="Ogiwara A."/>
            <person name="Oudega B."/>
            <person name="Park S.-H."/>
            <person name="Parro V."/>
            <person name="Pohl T.M."/>
            <person name="Portetelle D."/>
            <person name="Porwollik S."/>
            <person name="Prescott A.M."/>
            <person name="Presecan E."/>
            <person name="Pujic P."/>
            <person name="Purnelle B."/>
            <person name="Rapoport G."/>
            <person name="Rey M."/>
            <person name="Reynolds S."/>
            <person name="Rieger M."/>
            <person name="Rivolta C."/>
            <person name="Rocha E."/>
            <person name="Roche B."/>
            <person name="Rose M."/>
            <person name="Sadaie Y."/>
            <person name="Sato T."/>
            <person name="Scanlan E."/>
            <person name="Schleich S."/>
            <person name="Schroeter R."/>
            <person name="Scoffone F."/>
            <person name="Sekiguchi J."/>
            <person name="Sekowska A."/>
            <person name="Seror S.J."/>
            <person name="Serror P."/>
            <person name="Shin B.-S."/>
            <person name="Soldo B."/>
            <person name="Sorokin A."/>
            <person name="Tacconi E."/>
            <person name="Takagi T."/>
            <person name="Takahashi H."/>
            <person name="Takemaru K."/>
            <person name="Takeuchi M."/>
            <person name="Tamakoshi A."/>
            <person name="Tanaka T."/>
            <person name="Terpstra P."/>
            <person name="Tognoni A."/>
            <person name="Tosato V."/>
            <person name="Uchiyama S."/>
            <person name="Vandenbol M."/>
            <person name="Vannier F."/>
            <person name="Vassarotti A."/>
            <person name="Viari A."/>
            <person name="Wambutt R."/>
            <person name="Wedler E."/>
            <person name="Wedler H."/>
            <person name="Weitzenegger T."/>
            <person name="Winters P."/>
            <person name="Wipat A."/>
            <person name="Yamamoto H."/>
            <person name="Yamane K."/>
            <person name="Yasumoto K."/>
            <person name="Yata K."/>
            <person name="Yoshida K."/>
            <person name="Yoshikawa H.-F."/>
            <person name="Zumstein E."/>
            <person name="Yoshikawa H."/>
            <person name="Danchin A."/>
        </authorList>
    </citation>
    <scope>NUCLEOTIDE SEQUENCE [LARGE SCALE GENOMIC DNA]</scope>
    <source>
        <strain>168</strain>
    </source>
</reference>
<feature type="chain" id="PRO_0000380078" description="Uncharacterized membrane protein YizD">
    <location>
        <begin position="1"/>
        <end position="55"/>
    </location>
</feature>
<feature type="transmembrane region" description="Helical" evidence="1">
    <location>
        <begin position="5"/>
        <end position="25"/>
    </location>
</feature>
<feature type="transmembrane region" description="Helical" evidence="1">
    <location>
        <begin position="26"/>
        <end position="46"/>
    </location>
</feature>
<comment type="subcellular location">
    <subcellularLocation>
        <location evidence="2">Cell membrane</location>
        <topology evidence="2">Multi-pass membrane protein</topology>
    </subcellularLocation>
</comment>
<gene>
    <name type="primary">yizD</name>
    <name type="ordered locus">BSU11549</name>
</gene>
<sequence>MMSTLISIVCIAVFFCLNILGMMHMLPLYITSPLLFLSILFTLYRLNHRKTFKGF</sequence>
<evidence type="ECO:0000255" key="1"/>
<evidence type="ECO:0000305" key="2"/>
<dbReference type="EMBL" id="AL009126">
    <property type="protein sequence ID" value="CAX52593.1"/>
    <property type="molecule type" value="Genomic_DNA"/>
</dbReference>
<dbReference type="RefSeq" id="WP_003244944.1">
    <property type="nucleotide sequence ID" value="NZ_OZ025638.1"/>
</dbReference>
<dbReference type="RefSeq" id="YP_003097703.1">
    <property type="nucleotide sequence ID" value="NC_000964.3"/>
</dbReference>
<dbReference type="SMR" id="C0H3Y6"/>
<dbReference type="FunCoup" id="C0H3Y6">
    <property type="interactions" value="3"/>
</dbReference>
<dbReference type="STRING" id="224308.BSU11549"/>
<dbReference type="PaxDb" id="224308-BSU11549"/>
<dbReference type="EnsemblBacteria" id="CAX52593">
    <property type="protein sequence ID" value="CAX52593"/>
    <property type="gene ID" value="BSU_11549"/>
</dbReference>
<dbReference type="GeneID" id="8303008"/>
<dbReference type="KEGG" id="bsu:BSU11549"/>
<dbReference type="PATRIC" id="fig|224308.179.peg.1242"/>
<dbReference type="eggNOG" id="ENOG5031E5Z">
    <property type="taxonomic scope" value="Bacteria"/>
</dbReference>
<dbReference type="InParanoid" id="C0H3Y6"/>
<dbReference type="OrthoDB" id="2971431at2"/>
<dbReference type="BioCyc" id="BSUB:BSU11549-MONOMER"/>
<dbReference type="Proteomes" id="UP000001570">
    <property type="component" value="Chromosome"/>
</dbReference>
<dbReference type="GO" id="GO:0005886">
    <property type="term" value="C:plasma membrane"/>
    <property type="evidence" value="ECO:0007669"/>
    <property type="project" value="UniProtKB-SubCell"/>
</dbReference>
<keyword id="KW-1003">Cell membrane</keyword>
<keyword id="KW-0472">Membrane</keyword>
<keyword id="KW-1185">Reference proteome</keyword>
<keyword id="KW-0812">Transmembrane</keyword>
<keyword id="KW-1133">Transmembrane helix</keyword>